<proteinExistence type="inferred from homology"/>
<gene>
    <name evidence="2" type="primary">pyrH</name>
    <name type="ordered locus">SF0161</name>
    <name type="ordered locus">S0164</name>
</gene>
<name>PYRH_SHIFL</name>
<protein>
    <recommendedName>
        <fullName evidence="2">Uridylate kinase</fullName>
        <shortName evidence="2">UK</shortName>
        <ecNumber evidence="2">2.7.4.22</ecNumber>
    </recommendedName>
    <alternativeName>
        <fullName evidence="2">Uridine monophosphate kinase</fullName>
        <shortName evidence="2">UMP kinase</shortName>
        <shortName evidence="2">UMPK</shortName>
    </alternativeName>
</protein>
<accession>P0A7F2</accession>
<accession>P29464</accession>
<dbReference type="EC" id="2.7.4.22" evidence="2"/>
<dbReference type="EMBL" id="AE005674">
    <property type="protein sequence ID" value="AAN41823.1"/>
    <property type="molecule type" value="Genomic_DNA"/>
</dbReference>
<dbReference type="EMBL" id="AE014073">
    <property type="protein sequence ID" value="AAP15704.1"/>
    <property type="molecule type" value="Genomic_DNA"/>
</dbReference>
<dbReference type="RefSeq" id="NP_706116.1">
    <property type="nucleotide sequence ID" value="NC_004337.2"/>
</dbReference>
<dbReference type="RefSeq" id="WP_000224573.1">
    <property type="nucleotide sequence ID" value="NZ_WPGW01000006.1"/>
</dbReference>
<dbReference type="SMR" id="P0A7F2"/>
<dbReference type="STRING" id="198214.SF0161"/>
<dbReference type="PaxDb" id="198214-SF0161"/>
<dbReference type="GeneID" id="1024474"/>
<dbReference type="GeneID" id="93777254"/>
<dbReference type="KEGG" id="sfl:SF0161"/>
<dbReference type="KEGG" id="sfx:S0164"/>
<dbReference type="PATRIC" id="fig|198214.7.peg.182"/>
<dbReference type="HOGENOM" id="CLU_033861_0_0_6"/>
<dbReference type="UniPathway" id="UPA00159">
    <property type="reaction ID" value="UER00275"/>
</dbReference>
<dbReference type="Proteomes" id="UP000001006">
    <property type="component" value="Chromosome"/>
</dbReference>
<dbReference type="Proteomes" id="UP000002673">
    <property type="component" value="Chromosome"/>
</dbReference>
<dbReference type="GO" id="GO:0005829">
    <property type="term" value="C:cytosol"/>
    <property type="evidence" value="ECO:0007669"/>
    <property type="project" value="TreeGrafter"/>
</dbReference>
<dbReference type="GO" id="GO:0005524">
    <property type="term" value="F:ATP binding"/>
    <property type="evidence" value="ECO:0007669"/>
    <property type="project" value="UniProtKB-KW"/>
</dbReference>
<dbReference type="GO" id="GO:0033862">
    <property type="term" value="F:UMP kinase activity"/>
    <property type="evidence" value="ECO:0007669"/>
    <property type="project" value="UniProtKB-EC"/>
</dbReference>
<dbReference type="GO" id="GO:0044210">
    <property type="term" value="P:'de novo' CTP biosynthetic process"/>
    <property type="evidence" value="ECO:0007669"/>
    <property type="project" value="UniProtKB-UniRule"/>
</dbReference>
<dbReference type="GO" id="GO:0006225">
    <property type="term" value="P:UDP biosynthetic process"/>
    <property type="evidence" value="ECO:0007669"/>
    <property type="project" value="TreeGrafter"/>
</dbReference>
<dbReference type="CDD" id="cd04254">
    <property type="entry name" value="AAK_UMPK-PyrH-Ec"/>
    <property type="match status" value="1"/>
</dbReference>
<dbReference type="FunFam" id="3.40.1160.10:FF:000001">
    <property type="entry name" value="Uridylate kinase"/>
    <property type="match status" value="1"/>
</dbReference>
<dbReference type="Gene3D" id="3.40.1160.10">
    <property type="entry name" value="Acetylglutamate kinase-like"/>
    <property type="match status" value="1"/>
</dbReference>
<dbReference type="HAMAP" id="MF_01220_B">
    <property type="entry name" value="PyrH_B"/>
    <property type="match status" value="1"/>
</dbReference>
<dbReference type="InterPro" id="IPR036393">
    <property type="entry name" value="AceGlu_kinase-like_sf"/>
</dbReference>
<dbReference type="InterPro" id="IPR001048">
    <property type="entry name" value="Asp/Glu/Uridylate_kinase"/>
</dbReference>
<dbReference type="InterPro" id="IPR011817">
    <property type="entry name" value="Uridylate_kinase"/>
</dbReference>
<dbReference type="InterPro" id="IPR015963">
    <property type="entry name" value="Uridylate_kinase_bac"/>
</dbReference>
<dbReference type="NCBIfam" id="TIGR02075">
    <property type="entry name" value="pyrH_bact"/>
    <property type="match status" value="1"/>
</dbReference>
<dbReference type="PANTHER" id="PTHR42833">
    <property type="entry name" value="URIDYLATE KINASE"/>
    <property type="match status" value="1"/>
</dbReference>
<dbReference type="PANTHER" id="PTHR42833:SF4">
    <property type="entry name" value="URIDYLATE KINASE PUMPKIN, CHLOROPLASTIC"/>
    <property type="match status" value="1"/>
</dbReference>
<dbReference type="Pfam" id="PF00696">
    <property type="entry name" value="AA_kinase"/>
    <property type="match status" value="1"/>
</dbReference>
<dbReference type="PIRSF" id="PIRSF005650">
    <property type="entry name" value="Uridylate_kin"/>
    <property type="match status" value="1"/>
</dbReference>
<dbReference type="SUPFAM" id="SSF53633">
    <property type="entry name" value="Carbamate kinase-like"/>
    <property type="match status" value="1"/>
</dbReference>
<organism>
    <name type="scientific">Shigella flexneri</name>
    <dbReference type="NCBI Taxonomy" id="623"/>
    <lineage>
        <taxon>Bacteria</taxon>
        <taxon>Pseudomonadati</taxon>
        <taxon>Pseudomonadota</taxon>
        <taxon>Gammaproteobacteria</taxon>
        <taxon>Enterobacterales</taxon>
        <taxon>Enterobacteriaceae</taxon>
        <taxon>Shigella</taxon>
    </lineage>
</organism>
<feature type="initiator methionine" description="Removed" evidence="1">
    <location>
        <position position="1"/>
    </location>
</feature>
<feature type="chain" id="PRO_0000143880" description="Uridylate kinase">
    <location>
        <begin position="2"/>
        <end position="241"/>
    </location>
</feature>
<feature type="region of interest" description="Involved in allosteric activation by GTP" evidence="2">
    <location>
        <begin position="23"/>
        <end position="28"/>
    </location>
</feature>
<feature type="binding site" evidence="2">
    <location>
        <begin position="15"/>
        <end position="18"/>
    </location>
    <ligand>
        <name>ATP</name>
        <dbReference type="ChEBI" id="CHEBI:30616"/>
    </ligand>
</feature>
<feature type="binding site" evidence="2">
    <location>
        <position position="57"/>
    </location>
    <ligand>
        <name>UMP</name>
        <dbReference type="ChEBI" id="CHEBI:57865"/>
    </ligand>
</feature>
<feature type="binding site" evidence="2">
    <location>
        <position position="58"/>
    </location>
    <ligand>
        <name>ATP</name>
        <dbReference type="ChEBI" id="CHEBI:30616"/>
    </ligand>
</feature>
<feature type="binding site" evidence="2">
    <location>
        <position position="62"/>
    </location>
    <ligand>
        <name>ATP</name>
        <dbReference type="ChEBI" id="CHEBI:30616"/>
    </ligand>
</feature>
<feature type="binding site" evidence="2">
    <location>
        <position position="77"/>
    </location>
    <ligand>
        <name>UMP</name>
        <dbReference type="ChEBI" id="CHEBI:57865"/>
    </ligand>
</feature>
<feature type="binding site" evidence="2">
    <location>
        <begin position="138"/>
        <end position="145"/>
    </location>
    <ligand>
        <name>UMP</name>
        <dbReference type="ChEBI" id="CHEBI:57865"/>
    </ligand>
</feature>
<feature type="binding site" evidence="2">
    <location>
        <position position="165"/>
    </location>
    <ligand>
        <name>ATP</name>
        <dbReference type="ChEBI" id="CHEBI:30616"/>
    </ligand>
</feature>
<feature type="binding site" evidence="2">
    <location>
        <position position="171"/>
    </location>
    <ligand>
        <name>ATP</name>
        <dbReference type="ChEBI" id="CHEBI:30616"/>
    </ligand>
</feature>
<feature type="binding site" evidence="2">
    <location>
        <position position="174"/>
    </location>
    <ligand>
        <name>ATP</name>
        <dbReference type="ChEBI" id="CHEBI:30616"/>
    </ligand>
</feature>
<keyword id="KW-0021">Allosteric enzyme</keyword>
<keyword id="KW-0067">ATP-binding</keyword>
<keyword id="KW-0963">Cytoplasm</keyword>
<keyword id="KW-0418">Kinase</keyword>
<keyword id="KW-0547">Nucleotide-binding</keyword>
<keyword id="KW-0665">Pyrimidine biosynthesis</keyword>
<keyword id="KW-1185">Reference proteome</keyword>
<keyword id="KW-0808">Transferase</keyword>
<comment type="function">
    <text evidence="2">Catalyzes the reversible phosphorylation of UMP to UDP.</text>
</comment>
<comment type="catalytic activity">
    <reaction evidence="2">
        <text>UMP + ATP = UDP + ADP</text>
        <dbReference type="Rhea" id="RHEA:24400"/>
        <dbReference type="ChEBI" id="CHEBI:30616"/>
        <dbReference type="ChEBI" id="CHEBI:57865"/>
        <dbReference type="ChEBI" id="CHEBI:58223"/>
        <dbReference type="ChEBI" id="CHEBI:456216"/>
        <dbReference type="EC" id="2.7.4.22"/>
    </reaction>
</comment>
<comment type="activity regulation">
    <text evidence="2">Allosterically activated by GTP. Inhibited by UTP.</text>
</comment>
<comment type="pathway">
    <text evidence="2">Pyrimidine metabolism; CTP biosynthesis via de novo pathway; UDP from UMP (UMPK route): step 1/1.</text>
</comment>
<comment type="subunit">
    <text evidence="2">Homohexamer.</text>
</comment>
<comment type="subcellular location">
    <subcellularLocation>
        <location evidence="2">Cytoplasm</location>
    </subcellularLocation>
</comment>
<comment type="similarity">
    <text evidence="2">Belongs to the UMP kinase family.</text>
</comment>
<reference key="1">
    <citation type="journal article" date="2002" name="Nucleic Acids Res.">
        <title>Genome sequence of Shigella flexneri 2a: insights into pathogenicity through comparison with genomes of Escherichia coli K12 and O157.</title>
        <authorList>
            <person name="Jin Q."/>
            <person name="Yuan Z."/>
            <person name="Xu J."/>
            <person name="Wang Y."/>
            <person name="Shen Y."/>
            <person name="Lu W."/>
            <person name="Wang J."/>
            <person name="Liu H."/>
            <person name="Yang J."/>
            <person name="Yang F."/>
            <person name="Zhang X."/>
            <person name="Zhang J."/>
            <person name="Yang G."/>
            <person name="Wu H."/>
            <person name="Qu D."/>
            <person name="Dong J."/>
            <person name="Sun L."/>
            <person name="Xue Y."/>
            <person name="Zhao A."/>
            <person name="Gao Y."/>
            <person name="Zhu J."/>
            <person name="Kan B."/>
            <person name="Ding K."/>
            <person name="Chen S."/>
            <person name="Cheng H."/>
            <person name="Yao Z."/>
            <person name="He B."/>
            <person name="Chen R."/>
            <person name="Ma D."/>
            <person name="Qiang B."/>
            <person name="Wen Y."/>
            <person name="Hou Y."/>
            <person name="Yu J."/>
        </authorList>
    </citation>
    <scope>NUCLEOTIDE SEQUENCE [LARGE SCALE GENOMIC DNA]</scope>
    <source>
        <strain>301 / Serotype 2a</strain>
    </source>
</reference>
<reference key="2">
    <citation type="journal article" date="2003" name="Infect. Immun.">
        <title>Complete genome sequence and comparative genomics of Shigella flexneri serotype 2a strain 2457T.</title>
        <authorList>
            <person name="Wei J."/>
            <person name="Goldberg M.B."/>
            <person name="Burland V."/>
            <person name="Venkatesan M.M."/>
            <person name="Deng W."/>
            <person name="Fournier G."/>
            <person name="Mayhew G.F."/>
            <person name="Plunkett G. III"/>
            <person name="Rose D.J."/>
            <person name="Darling A."/>
            <person name="Mau B."/>
            <person name="Perna N.T."/>
            <person name="Payne S.M."/>
            <person name="Runyen-Janecky L.J."/>
            <person name="Zhou S."/>
            <person name="Schwartz D.C."/>
            <person name="Blattner F.R."/>
        </authorList>
    </citation>
    <scope>NUCLEOTIDE SEQUENCE [LARGE SCALE GENOMIC DNA]</scope>
    <source>
        <strain>ATCC 700930 / 2457T / Serotype 2a</strain>
    </source>
</reference>
<sequence>MATNAKPVYKRILLKLSGEALQGTEGFGIDASILDRMAQEIKELVELGIQVGVVIGGGNLFRGAGLAKAGMNRVVGDHMGMLATVMNGLAMRDALHRAYVNARLMSAIPLNGVCDSYSWAEAISLLRNNRVVILSAGTGNPFFTTDSAACLRGIEIEADVVLKATKVDGVFTADPAKDPTATMYEQLTYSEVLEKELKVMDLAAFTLARDHKLPIRVFNMNKPGALRRVVMGEKEGTLITE</sequence>
<evidence type="ECO:0000250" key="1"/>
<evidence type="ECO:0000255" key="2">
    <source>
        <dbReference type="HAMAP-Rule" id="MF_01220"/>
    </source>
</evidence>